<accession>Q3ZBX6</accession>
<protein>
    <recommendedName>
        <fullName evidence="3">Large ribosomal subunit protein uL3m</fullName>
    </recommendedName>
    <alternativeName>
        <fullName>39S ribosomal protein L3, mitochondrial</fullName>
        <shortName>L3mt</shortName>
        <shortName>MRP-L3</shortName>
    </alternativeName>
</protein>
<proteinExistence type="evidence at protein level"/>
<organism>
    <name type="scientific">Bos taurus</name>
    <name type="common">Bovine</name>
    <dbReference type="NCBI Taxonomy" id="9913"/>
    <lineage>
        <taxon>Eukaryota</taxon>
        <taxon>Metazoa</taxon>
        <taxon>Chordata</taxon>
        <taxon>Craniata</taxon>
        <taxon>Vertebrata</taxon>
        <taxon>Euteleostomi</taxon>
        <taxon>Mammalia</taxon>
        <taxon>Eutheria</taxon>
        <taxon>Laurasiatheria</taxon>
        <taxon>Artiodactyla</taxon>
        <taxon>Ruminantia</taxon>
        <taxon>Pecora</taxon>
        <taxon>Bovidae</taxon>
        <taxon>Bovinae</taxon>
        <taxon>Bos</taxon>
    </lineage>
</organism>
<keyword id="KW-0002">3D-structure</keyword>
<keyword id="KW-0903">Direct protein sequencing</keyword>
<keyword id="KW-0496">Mitochondrion</keyword>
<keyword id="KW-1185">Reference proteome</keyword>
<keyword id="KW-0687">Ribonucleoprotein</keyword>
<keyword id="KW-0689">Ribosomal protein</keyword>
<keyword id="KW-0809">Transit peptide</keyword>
<comment type="subunit">
    <text evidence="1">Component of the mitochondrial ribosome large subunit (39S) which comprises a 16S rRNA and about 50 distinct proteins.</text>
</comment>
<comment type="subcellular location">
    <subcellularLocation>
        <location evidence="1 2">Mitochondrion</location>
    </subcellularLocation>
</comment>
<comment type="similarity">
    <text evidence="3">Belongs to the universal ribosomal protein uL3 family.</text>
</comment>
<name>RM03_BOVIN</name>
<sequence>MPGWRLLAWAGARVLDRGTGGLGTALGSGNRTDICVLVRSLHGKSGTWWDEHLSEENVSFVKQLVSDENKAQLASKLCPLKDEPWPIHPWEPGSSRVGLVALKLGMMPLWTKDGKKHVVTLLQVQDCHVLKYTPKENHNGKMAALTVGGKTVSRFHKSTSILEFYQELGLPPKQKIKMFNVTDNAVIKPGTPLYAAHFRPGQYVDVTAKTIGKGFQGVMKRWGFKGQPATHGQTKTHRRPGAISTGDVARVWPGTKMPGQLGNVDRTAFGLKVWRINTKHNIIYVNGSVPGHRNCLVKIKDSVLPAYKDFCKNLPFPTYFPDEDEKELPEDLYDEEVCQPGAPSITFV</sequence>
<feature type="transit peptide" description="Mitochondrion" evidence="1">
    <location>
        <begin position="1"/>
        <end position="40"/>
    </location>
</feature>
<feature type="chain" id="PRO_0000077252" description="Large ribosomal subunit protein uL3m">
    <location>
        <begin position="41"/>
        <end position="348"/>
    </location>
</feature>
<dbReference type="EMBL" id="BC103047">
    <property type="protein sequence ID" value="AAI03048.1"/>
    <property type="molecule type" value="mRNA"/>
</dbReference>
<dbReference type="RefSeq" id="NP_001073786.1">
    <property type="nucleotide sequence ID" value="NM_001080317.2"/>
</dbReference>
<dbReference type="PDB" id="2FTC">
    <property type="method" value="EM"/>
    <property type="chains" value="C=96-306"/>
</dbReference>
<dbReference type="PDBsum" id="2FTC"/>
<dbReference type="SMR" id="Q3ZBX6"/>
<dbReference type="FunCoup" id="Q3ZBX6">
    <property type="interactions" value="2702"/>
</dbReference>
<dbReference type="STRING" id="9913.ENSBTAP00000041336"/>
<dbReference type="iPTMnet" id="Q3ZBX6"/>
<dbReference type="PaxDb" id="9913-ENSBTAP00000041336"/>
<dbReference type="Ensembl" id="ENSBTAT00000043792.2">
    <property type="protein sequence ID" value="ENSBTAP00000041336.1"/>
    <property type="gene ID" value="ENSBTAG00000030942.3"/>
</dbReference>
<dbReference type="GeneID" id="614906"/>
<dbReference type="KEGG" id="bta:614906"/>
<dbReference type="CTD" id="11222"/>
<dbReference type="VEuPathDB" id="HostDB:ENSBTAG00000030942"/>
<dbReference type="VGNC" id="VGNC:31630">
    <property type="gene designation" value="MRPL3"/>
</dbReference>
<dbReference type="eggNOG" id="KOG3141">
    <property type="taxonomic scope" value="Eukaryota"/>
</dbReference>
<dbReference type="GeneTree" id="ENSGT00390000011422"/>
<dbReference type="HOGENOM" id="CLU_044142_1_1_1"/>
<dbReference type="InParanoid" id="Q3ZBX6"/>
<dbReference type="OMA" id="IGIYPMW"/>
<dbReference type="OrthoDB" id="274683at2759"/>
<dbReference type="TreeFam" id="TF105634"/>
<dbReference type="Reactome" id="R-BTA-5389840">
    <property type="pathway name" value="Mitochondrial translation elongation"/>
</dbReference>
<dbReference type="Reactome" id="R-BTA-5419276">
    <property type="pathway name" value="Mitochondrial translation termination"/>
</dbReference>
<dbReference type="EvolutionaryTrace" id="Q3ZBX6"/>
<dbReference type="Proteomes" id="UP000009136">
    <property type="component" value="Chromosome 1"/>
</dbReference>
<dbReference type="Bgee" id="ENSBTAG00000030942">
    <property type="expression patterns" value="Expressed in rumen papilla and 105 other cell types or tissues"/>
</dbReference>
<dbReference type="GO" id="GO:0005743">
    <property type="term" value="C:mitochondrial inner membrane"/>
    <property type="evidence" value="ECO:0000304"/>
    <property type="project" value="Reactome"/>
</dbReference>
<dbReference type="GO" id="GO:0005762">
    <property type="term" value="C:mitochondrial large ribosomal subunit"/>
    <property type="evidence" value="ECO:0000250"/>
    <property type="project" value="UniProtKB"/>
</dbReference>
<dbReference type="GO" id="GO:0003735">
    <property type="term" value="F:structural constituent of ribosome"/>
    <property type="evidence" value="ECO:0000318"/>
    <property type="project" value="GO_Central"/>
</dbReference>
<dbReference type="GO" id="GO:0006412">
    <property type="term" value="P:translation"/>
    <property type="evidence" value="ECO:0007669"/>
    <property type="project" value="InterPro"/>
</dbReference>
<dbReference type="FunFam" id="2.40.30.10:FF:000049">
    <property type="entry name" value="39S ribosomal protein L3, mitochondrial"/>
    <property type="match status" value="1"/>
</dbReference>
<dbReference type="FunFam" id="2.40.30.10:FF:000067">
    <property type="entry name" value="39S ribosomal protein L3, mitochondrial"/>
    <property type="match status" value="1"/>
</dbReference>
<dbReference type="Gene3D" id="2.40.30.10">
    <property type="entry name" value="Translation factors"/>
    <property type="match status" value="2"/>
</dbReference>
<dbReference type="InterPro" id="IPR000597">
    <property type="entry name" value="Ribosomal_uL3"/>
</dbReference>
<dbReference type="InterPro" id="IPR019927">
    <property type="entry name" value="Ribosomal_uL3_bac/org-type"/>
</dbReference>
<dbReference type="InterPro" id="IPR019926">
    <property type="entry name" value="Ribosomal_uL3_CS"/>
</dbReference>
<dbReference type="InterPro" id="IPR009000">
    <property type="entry name" value="Transl_B-barrel_sf"/>
</dbReference>
<dbReference type="NCBIfam" id="TIGR03625">
    <property type="entry name" value="L3_bact"/>
    <property type="match status" value="1"/>
</dbReference>
<dbReference type="PANTHER" id="PTHR11229">
    <property type="entry name" value="50S RIBOSOMAL PROTEIN L3"/>
    <property type="match status" value="1"/>
</dbReference>
<dbReference type="PANTHER" id="PTHR11229:SF8">
    <property type="entry name" value="LARGE RIBOSOMAL SUBUNIT PROTEIN UL3M"/>
    <property type="match status" value="1"/>
</dbReference>
<dbReference type="Pfam" id="PF00297">
    <property type="entry name" value="Ribosomal_L3"/>
    <property type="match status" value="1"/>
</dbReference>
<dbReference type="SUPFAM" id="SSF50447">
    <property type="entry name" value="Translation proteins"/>
    <property type="match status" value="1"/>
</dbReference>
<dbReference type="PROSITE" id="PS00474">
    <property type="entry name" value="RIBOSOMAL_L3"/>
    <property type="match status" value="1"/>
</dbReference>
<reference key="1">
    <citation type="submission" date="2005-08" db="EMBL/GenBank/DDBJ databases">
        <authorList>
            <consortium name="NIH - Mammalian Gene Collection (MGC) project"/>
        </authorList>
    </citation>
    <scope>NUCLEOTIDE SEQUENCE [LARGE SCALE MRNA]</scope>
    <source>
        <strain>Hereford</strain>
        <tissue>Rumen</tissue>
    </source>
</reference>
<reference key="2">
    <citation type="journal article" date="2001" name="J. Biol. Chem.">
        <title>Structural compensation for the deficit of rRNA with proteins in the mammalian mitochondrial ribosome. Systematic analysis of protein components of the large ribosomal subunit from mammalian mitochondria.</title>
        <authorList>
            <person name="Suzuki T."/>
            <person name="Terasaki M."/>
            <person name="Takemoto-Hori C."/>
            <person name="Hanada T."/>
            <person name="Ueda T."/>
            <person name="Wada A."/>
            <person name="Watanabe K."/>
        </authorList>
    </citation>
    <scope>PROTEIN SEQUENCE OF 41-50</scope>
    <scope>IDENTIFICATION BY MASS SPECTROMETRY</scope>
    <scope>SUBCELLULAR LOCATION</scope>
    <scope>SUBUNIT</scope>
</reference>
<reference key="3">
    <citation type="journal article" date="2006" name="J. Mol. Biol.">
        <title>A structural model for the large subunit of the mammalian mitochondrial ribosome.</title>
        <authorList>
            <person name="Mears J.A."/>
            <person name="Sharma M.R."/>
            <person name="Gutell R.R."/>
            <person name="McCook A.S."/>
            <person name="Richardson P.E."/>
            <person name="Caulfield T.R."/>
            <person name="Agrawal R.K."/>
            <person name="Harvey S.C."/>
        </authorList>
    </citation>
    <scope>STRUCTURE BY ELECTRON MICROSCOPY (12 ANGSTROMS)</scope>
    <scope>SUBCELLULAR LOCATION</scope>
</reference>
<evidence type="ECO:0000269" key="1">
    <source>
    </source>
</evidence>
<evidence type="ECO:0000269" key="2">
    <source>
    </source>
</evidence>
<evidence type="ECO:0000305" key="3"/>
<gene>
    <name type="primary">MRPL3</name>
</gene>